<reference key="1">
    <citation type="journal article" date="2005" name="J. Bacteriol.">
        <title>Whole-genome sequencing of Staphylococcus haemolyticus uncovers the extreme plasticity of its genome and the evolution of human-colonizing staphylococcal species.</title>
        <authorList>
            <person name="Takeuchi F."/>
            <person name="Watanabe S."/>
            <person name="Baba T."/>
            <person name="Yuzawa H."/>
            <person name="Ito T."/>
            <person name="Morimoto Y."/>
            <person name="Kuroda M."/>
            <person name="Cui L."/>
            <person name="Takahashi M."/>
            <person name="Ankai A."/>
            <person name="Baba S."/>
            <person name="Fukui S."/>
            <person name="Lee J.C."/>
            <person name="Hiramatsu K."/>
        </authorList>
    </citation>
    <scope>NUCLEOTIDE SEQUENCE [LARGE SCALE GENOMIC DNA]</scope>
    <source>
        <strain>JCSC1435</strain>
    </source>
</reference>
<protein>
    <recommendedName>
        <fullName evidence="1">ATP synthase subunit b</fullName>
    </recommendedName>
    <alternativeName>
        <fullName evidence="1">ATP synthase F(0) sector subunit b</fullName>
    </alternativeName>
    <alternativeName>
        <fullName evidence="1">ATPase subunit I</fullName>
    </alternativeName>
    <alternativeName>
        <fullName evidence="1">F-type ATPase subunit b</fullName>
        <shortName evidence="1">F-ATPase subunit b</shortName>
    </alternativeName>
</protein>
<gene>
    <name evidence="1" type="primary">atpF</name>
    <name type="ordered locus">SH0928</name>
</gene>
<organism>
    <name type="scientific">Staphylococcus haemolyticus (strain JCSC1435)</name>
    <dbReference type="NCBI Taxonomy" id="279808"/>
    <lineage>
        <taxon>Bacteria</taxon>
        <taxon>Bacillati</taxon>
        <taxon>Bacillota</taxon>
        <taxon>Bacilli</taxon>
        <taxon>Bacillales</taxon>
        <taxon>Staphylococcaceae</taxon>
        <taxon>Staphylococcus</taxon>
    </lineage>
</organism>
<accession>Q4L7Y8</accession>
<evidence type="ECO:0000255" key="1">
    <source>
        <dbReference type="HAMAP-Rule" id="MF_01398"/>
    </source>
</evidence>
<keyword id="KW-0066">ATP synthesis</keyword>
<keyword id="KW-1003">Cell membrane</keyword>
<keyword id="KW-0138">CF(0)</keyword>
<keyword id="KW-0375">Hydrogen ion transport</keyword>
<keyword id="KW-0406">Ion transport</keyword>
<keyword id="KW-0472">Membrane</keyword>
<keyword id="KW-0812">Transmembrane</keyword>
<keyword id="KW-1133">Transmembrane helix</keyword>
<keyword id="KW-0813">Transport</keyword>
<proteinExistence type="inferred from homology"/>
<name>ATPF_STAHJ</name>
<sequence>MPVNALTNSFVLGAAGGGVEWGTVIVTVITFAILLALLKKFAWGPLKEVMDKRERDINRDIDEAEEAKLNAQKLEEENKKTLKQTQDEVQRILEDARVQARKQHEEIIHEANIRANGMIETAQSEINSEKERALADINNQVSELSVLIASKVLKKEISEQDQKELVDKYLKEAGDK</sequence>
<feature type="chain" id="PRO_0000223706" description="ATP synthase subunit b">
    <location>
        <begin position="1"/>
        <end position="176"/>
    </location>
</feature>
<feature type="transmembrane region" description="Helical" evidence="1">
    <location>
        <begin position="18"/>
        <end position="38"/>
    </location>
</feature>
<dbReference type="EMBL" id="AP006716">
    <property type="protein sequence ID" value="BAE04237.1"/>
    <property type="molecule type" value="Genomic_DNA"/>
</dbReference>
<dbReference type="RefSeq" id="WP_011275239.1">
    <property type="nucleotide sequence ID" value="NC_007168.1"/>
</dbReference>
<dbReference type="SMR" id="Q4L7Y8"/>
<dbReference type="KEGG" id="sha:SH0928"/>
<dbReference type="eggNOG" id="COG0711">
    <property type="taxonomic scope" value="Bacteria"/>
</dbReference>
<dbReference type="HOGENOM" id="CLU_079215_4_2_9"/>
<dbReference type="OrthoDB" id="282095at2"/>
<dbReference type="Proteomes" id="UP000000543">
    <property type="component" value="Chromosome"/>
</dbReference>
<dbReference type="GO" id="GO:0005886">
    <property type="term" value="C:plasma membrane"/>
    <property type="evidence" value="ECO:0007669"/>
    <property type="project" value="UniProtKB-SubCell"/>
</dbReference>
<dbReference type="GO" id="GO:0045259">
    <property type="term" value="C:proton-transporting ATP synthase complex"/>
    <property type="evidence" value="ECO:0007669"/>
    <property type="project" value="UniProtKB-KW"/>
</dbReference>
<dbReference type="GO" id="GO:0046933">
    <property type="term" value="F:proton-transporting ATP synthase activity, rotational mechanism"/>
    <property type="evidence" value="ECO:0007669"/>
    <property type="project" value="UniProtKB-UniRule"/>
</dbReference>
<dbReference type="GO" id="GO:0046961">
    <property type="term" value="F:proton-transporting ATPase activity, rotational mechanism"/>
    <property type="evidence" value="ECO:0007669"/>
    <property type="project" value="TreeGrafter"/>
</dbReference>
<dbReference type="CDD" id="cd06503">
    <property type="entry name" value="ATP-synt_Fo_b"/>
    <property type="match status" value="1"/>
</dbReference>
<dbReference type="HAMAP" id="MF_01398">
    <property type="entry name" value="ATP_synth_b_bprime"/>
    <property type="match status" value="1"/>
</dbReference>
<dbReference type="InterPro" id="IPR028987">
    <property type="entry name" value="ATP_synth_B-like_membr_sf"/>
</dbReference>
<dbReference type="InterPro" id="IPR002146">
    <property type="entry name" value="ATP_synth_b/b'su_bac/chlpt"/>
</dbReference>
<dbReference type="InterPro" id="IPR005864">
    <property type="entry name" value="ATP_synth_F0_bsu_bac"/>
</dbReference>
<dbReference type="InterPro" id="IPR050059">
    <property type="entry name" value="ATP_synthase_B_chain"/>
</dbReference>
<dbReference type="NCBIfam" id="TIGR01144">
    <property type="entry name" value="ATP_synt_b"/>
    <property type="match status" value="1"/>
</dbReference>
<dbReference type="NCBIfam" id="NF009987">
    <property type="entry name" value="PRK13453.1"/>
    <property type="match status" value="1"/>
</dbReference>
<dbReference type="PANTHER" id="PTHR33445:SF1">
    <property type="entry name" value="ATP SYNTHASE SUBUNIT B"/>
    <property type="match status" value="1"/>
</dbReference>
<dbReference type="PANTHER" id="PTHR33445">
    <property type="entry name" value="ATP SYNTHASE SUBUNIT B', CHLOROPLASTIC"/>
    <property type="match status" value="1"/>
</dbReference>
<dbReference type="Pfam" id="PF00430">
    <property type="entry name" value="ATP-synt_B"/>
    <property type="match status" value="1"/>
</dbReference>
<dbReference type="SUPFAM" id="SSF81573">
    <property type="entry name" value="F1F0 ATP synthase subunit B, membrane domain"/>
    <property type="match status" value="1"/>
</dbReference>
<comment type="function">
    <text evidence="1">F(1)F(0) ATP synthase produces ATP from ADP in the presence of a proton or sodium gradient. F-type ATPases consist of two structural domains, F(1) containing the extramembraneous catalytic core and F(0) containing the membrane proton channel, linked together by a central stalk and a peripheral stalk. During catalysis, ATP synthesis in the catalytic domain of F(1) is coupled via a rotary mechanism of the central stalk subunits to proton translocation.</text>
</comment>
<comment type="function">
    <text evidence="1">Component of the F(0) channel, it forms part of the peripheral stalk, linking F(1) to F(0).</text>
</comment>
<comment type="subunit">
    <text evidence="1">F-type ATPases have 2 components, F(1) - the catalytic core - and F(0) - the membrane proton channel. F(1) has five subunits: alpha(3), beta(3), gamma(1), delta(1), epsilon(1). F(0) has three main subunits: a(1), b(2) and c(10-14). The alpha and beta chains form an alternating ring which encloses part of the gamma chain. F(1) is attached to F(0) by a central stalk formed by the gamma and epsilon chains, while a peripheral stalk is formed by the delta and b chains.</text>
</comment>
<comment type="subcellular location">
    <subcellularLocation>
        <location evidence="1">Cell membrane</location>
        <topology evidence="1">Single-pass membrane protein</topology>
    </subcellularLocation>
</comment>
<comment type="similarity">
    <text evidence="1">Belongs to the ATPase B chain family.</text>
</comment>